<reference key="1">
    <citation type="journal article" date="1994" name="J. Bacteriol.">
        <title>RpoN (sigma 54) is required for conversion of phenol to catechol in Acinetobacter calcoaceticus.</title>
        <authorList>
            <person name="Ehrt S."/>
            <person name="Ornston L.N."/>
            <person name="Hillen W."/>
        </authorList>
    </citation>
    <scope>NUCLEOTIDE SEQUENCE [GENOMIC DNA]</scope>
    <source>
        <strain>ATCC 11171 / DSM 590 / CCUG 2491 / LMG 988 / NCIMB 8250 / CIP 63.46 / B94</strain>
    </source>
</reference>
<comment type="function">
    <text evidence="1">During stationary phase, promotes and stabilizes dimerization of 70S ribosomes by the ribosome modulation factor (RMF), leading to the formation of inactive 100S ribosomes.</text>
</comment>
<comment type="subunit">
    <text evidence="1">Associates exclusively with 100S ribosomes, which are dimers of 70S ribosomes.</text>
</comment>
<comment type="similarity">
    <text evidence="2">Belongs to the HPF/YfiA ribosome-associated protein family. Short HPF subfamily.</text>
</comment>
<gene>
    <name type="primary">hpf</name>
</gene>
<protein>
    <recommendedName>
        <fullName>Ribosome hibernation promoting factor</fullName>
        <shortName>HPF</shortName>
    </recommendedName>
    <alternativeName>
        <fullName>Hibernation factor HPF</fullName>
    </alternativeName>
</protein>
<evidence type="ECO:0000250" key="1">
    <source>
        <dbReference type="UniProtKB" id="P0AFX0"/>
    </source>
</evidence>
<evidence type="ECO:0000305" key="2"/>
<accession>P33987</accession>
<feature type="chain" id="PRO_0000097414" description="Ribosome hibernation promoting factor">
    <location>
        <begin position="1"/>
        <end position="113"/>
    </location>
</feature>
<organism>
    <name type="scientific">Acinetobacter guillouiae</name>
    <name type="common">Acinetobacter genomosp. 11</name>
    <dbReference type="NCBI Taxonomy" id="106649"/>
    <lineage>
        <taxon>Bacteria</taxon>
        <taxon>Pseudomonadati</taxon>
        <taxon>Pseudomonadota</taxon>
        <taxon>Gammaproteobacteria</taxon>
        <taxon>Moraxellales</taxon>
        <taxon>Moraxellaceae</taxon>
        <taxon>Acinetobacter</taxon>
    </lineage>
</organism>
<sequence>MQITIRGHHLSITPAIEENIRDRFTQMTKHIDQVNSMQVKLSKDHQLDKRSKKGSANHIAEAIVRLPGIELFAQASADDMYNAITKLTDKLKRQLDKHRKMQLDYQPMEILAT</sequence>
<dbReference type="EMBL" id="L26051">
    <property type="protein sequence ID" value="AAA21616.1"/>
    <property type="molecule type" value="Genomic_DNA"/>
</dbReference>
<dbReference type="RefSeq" id="WP_004723731.1">
    <property type="nucleotide sequence ID" value="NZ_VZOG01000042.1"/>
</dbReference>
<dbReference type="SMR" id="P33987"/>
<dbReference type="STRING" id="106649.GCA_000829655_01553"/>
<dbReference type="GO" id="GO:0022627">
    <property type="term" value="C:cytosolic small ribosomal subunit"/>
    <property type="evidence" value="ECO:0007669"/>
    <property type="project" value="TreeGrafter"/>
</dbReference>
<dbReference type="GO" id="GO:0043024">
    <property type="term" value="F:ribosomal small subunit binding"/>
    <property type="evidence" value="ECO:0007669"/>
    <property type="project" value="TreeGrafter"/>
</dbReference>
<dbReference type="GO" id="GO:0045900">
    <property type="term" value="P:negative regulation of translational elongation"/>
    <property type="evidence" value="ECO:0007669"/>
    <property type="project" value="TreeGrafter"/>
</dbReference>
<dbReference type="CDD" id="cd00552">
    <property type="entry name" value="RaiA"/>
    <property type="match status" value="1"/>
</dbReference>
<dbReference type="Gene3D" id="3.30.160.100">
    <property type="entry name" value="Ribosome hibernation promotion factor-like"/>
    <property type="match status" value="1"/>
</dbReference>
<dbReference type="InterPro" id="IPR050574">
    <property type="entry name" value="HPF/YfiA_ribosome-assoc"/>
</dbReference>
<dbReference type="InterPro" id="IPR036567">
    <property type="entry name" value="RHF-like"/>
</dbReference>
<dbReference type="InterPro" id="IPR003489">
    <property type="entry name" value="RHF/RaiA"/>
</dbReference>
<dbReference type="NCBIfam" id="TIGR00741">
    <property type="entry name" value="yfiA"/>
    <property type="match status" value="1"/>
</dbReference>
<dbReference type="PANTHER" id="PTHR33231">
    <property type="entry name" value="30S RIBOSOMAL PROTEIN"/>
    <property type="match status" value="1"/>
</dbReference>
<dbReference type="PANTHER" id="PTHR33231:SF1">
    <property type="entry name" value="30S RIBOSOMAL PROTEIN"/>
    <property type="match status" value="1"/>
</dbReference>
<dbReference type="Pfam" id="PF02482">
    <property type="entry name" value="Ribosomal_S30AE"/>
    <property type="match status" value="1"/>
</dbReference>
<dbReference type="SUPFAM" id="SSF69754">
    <property type="entry name" value="Ribosome binding protein Y (YfiA homologue)"/>
    <property type="match status" value="1"/>
</dbReference>
<name>HPF_ACIGI</name>
<proteinExistence type="inferred from homology"/>
<keyword id="KW-0810">Translation regulation</keyword>